<gene>
    <name evidence="2" type="primary">infB</name>
    <name type="ordered locus">Nwi_0024</name>
</gene>
<keyword id="KW-0963">Cytoplasm</keyword>
<keyword id="KW-0342">GTP-binding</keyword>
<keyword id="KW-0396">Initiation factor</keyword>
<keyword id="KW-0547">Nucleotide-binding</keyword>
<keyword id="KW-0648">Protein biosynthesis</keyword>
<keyword id="KW-1185">Reference proteome</keyword>
<proteinExistence type="inferred from homology"/>
<accession>Q3SWP9</accession>
<comment type="function">
    <text evidence="2">One of the essential components for the initiation of protein synthesis. Protects formylmethionyl-tRNA from spontaneous hydrolysis and promotes its binding to the 30S ribosomal subunits. Also involved in the hydrolysis of GTP during the formation of the 70S ribosomal complex.</text>
</comment>
<comment type="subcellular location">
    <subcellularLocation>
        <location evidence="2">Cytoplasm</location>
    </subcellularLocation>
</comment>
<comment type="similarity">
    <text evidence="2">Belongs to the TRAFAC class translation factor GTPase superfamily. Classic translation factor GTPase family. IF-2 subfamily.</text>
</comment>
<sequence>MVDTKNPGDKTLSVSPTKTLTLKPRVEQGTVRQSFSHGRTKQVVVEKRGKRRIGGDSPGPEPAGTSEPASARTPAAKAPPARAATPAAPRAGSGVVLRKLTEDERSARASALAEAKVRAEEERRIAEAEAARRNSKEGIEQAEREAAEARRKAEEERHRQEEEAKRKAEIEAKRRFGQTESKPAPAKTTTTTTRAAPPARPAAVAADGSDEDEAPRLVRRPGGPARPVIAPKPAAKPAPAKQRGRLTLVTALSADDVRERSIASFRRRTQRLKGHASNEPKEKLVREVVVPEAITIQELANRMAERAVDVIRMLMKQGAMHKITDVIDADTAQLIAEELGHTVKRVAASDVEEGLFDVVDNSTDIEPRSPVVTVMGHVDHGKTSLLDALRHANVVSGEAGGITQHIGAYQVTSPESGKKITFIDTPGHAAFTAMRARGAKVTDLVILVVAADDGVMPQTIEAINHAKAAKVPMIIAINKIDKPEAKPERVRTELLQHEVQVESMGGQVVDVEVSAKNKTNLDKLLEMISLQADLLDLKTNASRPAEGTVIEAKLDRGRGPVATVLVQRGTLRVGDIIVAGAEMGRVRALISDQGETVNEAGPSVPVEVLGFNGPPEAGDRLAVVENEARARQVTSYRAHQKRENAAASTSGMRGSLEQMMSQLKTVGRKDFPLIIKADVQGSLEAILGSLEKLGTDEVAARILHAGVGGISESDVTLAEGFNAAIIGFSVRANKEAAAAAKRNGIEIRYYNIIYDLVDDVKKAMSGLLAPTLRETMLGNAEILEVFNISKVGKVAGCRVTDGSVERGANVRLIRDNVVVHEGKLSTLKRFKDEVKEVQSGQECGMAFESYGDMRVGDVIECYRVETIQRSL</sequence>
<reference key="1">
    <citation type="journal article" date="2006" name="Appl. Environ. Microbiol.">
        <title>Genome sequence of the chemolithoautotrophic nitrite-oxidizing bacterium Nitrobacter winogradskyi Nb-255.</title>
        <authorList>
            <person name="Starkenburg S.R."/>
            <person name="Chain P.S.G."/>
            <person name="Sayavedra-Soto L.A."/>
            <person name="Hauser L."/>
            <person name="Land M.L."/>
            <person name="Larimer F.W."/>
            <person name="Malfatti S.A."/>
            <person name="Klotz M.G."/>
            <person name="Bottomley P.J."/>
            <person name="Arp D.J."/>
            <person name="Hickey W.J."/>
        </authorList>
    </citation>
    <scope>NUCLEOTIDE SEQUENCE [LARGE SCALE GENOMIC DNA]</scope>
    <source>
        <strain>ATCC 25391 / DSM 10237 / CIP 104748 / NCIMB 11846 / Nb-255</strain>
    </source>
</reference>
<evidence type="ECO:0000250" key="1"/>
<evidence type="ECO:0000255" key="2">
    <source>
        <dbReference type="HAMAP-Rule" id="MF_00100"/>
    </source>
</evidence>
<evidence type="ECO:0000256" key="3">
    <source>
        <dbReference type="SAM" id="MobiDB-lite"/>
    </source>
</evidence>
<feature type="chain" id="PRO_0000228217" description="Translation initiation factor IF-2">
    <location>
        <begin position="1"/>
        <end position="871"/>
    </location>
</feature>
<feature type="domain" description="tr-type G">
    <location>
        <begin position="367"/>
        <end position="538"/>
    </location>
</feature>
<feature type="region of interest" description="Disordered" evidence="3">
    <location>
        <begin position="1"/>
        <end position="242"/>
    </location>
</feature>
<feature type="region of interest" description="G1" evidence="1">
    <location>
        <begin position="376"/>
        <end position="383"/>
    </location>
</feature>
<feature type="region of interest" description="G2" evidence="1">
    <location>
        <begin position="401"/>
        <end position="405"/>
    </location>
</feature>
<feature type="region of interest" description="G3" evidence="1">
    <location>
        <begin position="424"/>
        <end position="427"/>
    </location>
</feature>
<feature type="region of interest" description="G4" evidence="1">
    <location>
        <begin position="478"/>
        <end position="481"/>
    </location>
</feature>
<feature type="region of interest" description="G5" evidence="1">
    <location>
        <begin position="514"/>
        <end position="516"/>
    </location>
</feature>
<feature type="compositionally biased region" description="Low complexity" evidence="3">
    <location>
        <begin position="68"/>
        <end position="91"/>
    </location>
</feature>
<feature type="compositionally biased region" description="Basic and acidic residues" evidence="3">
    <location>
        <begin position="115"/>
        <end position="174"/>
    </location>
</feature>
<feature type="compositionally biased region" description="Low complexity" evidence="3">
    <location>
        <begin position="182"/>
        <end position="206"/>
    </location>
</feature>
<feature type="compositionally biased region" description="Low complexity" evidence="3">
    <location>
        <begin position="225"/>
        <end position="241"/>
    </location>
</feature>
<feature type="binding site" evidence="2">
    <location>
        <begin position="376"/>
        <end position="383"/>
    </location>
    <ligand>
        <name>GTP</name>
        <dbReference type="ChEBI" id="CHEBI:37565"/>
    </ligand>
</feature>
<feature type="binding site" evidence="2">
    <location>
        <begin position="424"/>
        <end position="428"/>
    </location>
    <ligand>
        <name>GTP</name>
        <dbReference type="ChEBI" id="CHEBI:37565"/>
    </ligand>
</feature>
<feature type="binding site" evidence="2">
    <location>
        <begin position="478"/>
        <end position="481"/>
    </location>
    <ligand>
        <name>GTP</name>
        <dbReference type="ChEBI" id="CHEBI:37565"/>
    </ligand>
</feature>
<protein>
    <recommendedName>
        <fullName evidence="2">Translation initiation factor IF-2</fullName>
    </recommendedName>
</protein>
<organism>
    <name type="scientific">Nitrobacter winogradskyi (strain ATCC 25391 / DSM 10237 / CIP 104748 / NCIMB 11846 / Nb-255)</name>
    <dbReference type="NCBI Taxonomy" id="323098"/>
    <lineage>
        <taxon>Bacteria</taxon>
        <taxon>Pseudomonadati</taxon>
        <taxon>Pseudomonadota</taxon>
        <taxon>Alphaproteobacteria</taxon>
        <taxon>Hyphomicrobiales</taxon>
        <taxon>Nitrobacteraceae</taxon>
        <taxon>Nitrobacter</taxon>
    </lineage>
</organism>
<dbReference type="EMBL" id="CP000115">
    <property type="protein sequence ID" value="ABA03292.1"/>
    <property type="molecule type" value="Genomic_DNA"/>
</dbReference>
<dbReference type="RefSeq" id="WP_011313363.1">
    <property type="nucleotide sequence ID" value="NC_007406.1"/>
</dbReference>
<dbReference type="SMR" id="Q3SWP9"/>
<dbReference type="STRING" id="323098.Nwi_0024"/>
<dbReference type="KEGG" id="nwi:Nwi_0024"/>
<dbReference type="eggNOG" id="COG0532">
    <property type="taxonomic scope" value="Bacteria"/>
</dbReference>
<dbReference type="HOGENOM" id="CLU_006301_10_0_5"/>
<dbReference type="OrthoDB" id="9811804at2"/>
<dbReference type="Proteomes" id="UP000002531">
    <property type="component" value="Chromosome"/>
</dbReference>
<dbReference type="GO" id="GO:0005829">
    <property type="term" value="C:cytosol"/>
    <property type="evidence" value="ECO:0007669"/>
    <property type="project" value="TreeGrafter"/>
</dbReference>
<dbReference type="GO" id="GO:0005525">
    <property type="term" value="F:GTP binding"/>
    <property type="evidence" value="ECO:0007669"/>
    <property type="project" value="UniProtKB-KW"/>
</dbReference>
<dbReference type="GO" id="GO:0003924">
    <property type="term" value="F:GTPase activity"/>
    <property type="evidence" value="ECO:0007669"/>
    <property type="project" value="UniProtKB-UniRule"/>
</dbReference>
<dbReference type="GO" id="GO:0097216">
    <property type="term" value="F:guanosine tetraphosphate binding"/>
    <property type="evidence" value="ECO:0007669"/>
    <property type="project" value="UniProtKB-ARBA"/>
</dbReference>
<dbReference type="GO" id="GO:0003743">
    <property type="term" value="F:translation initiation factor activity"/>
    <property type="evidence" value="ECO:0007669"/>
    <property type="project" value="UniProtKB-UniRule"/>
</dbReference>
<dbReference type="CDD" id="cd01887">
    <property type="entry name" value="IF2_eIF5B"/>
    <property type="match status" value="1"/>
</dbReference>
<dbReference type="CDD" id="cd03702">
    <property type="entry name" value="IF2_mtIF2_II"/>
    <property type="match status" value="1"/>
</dbReference>
<dbReference type="CDD" id="cd03692">
    <property type="entry name" value="mtIF2_IVc"/>
    <property type="match status" value="1"/>
</dbReference>
<dbReference type="FunFam" id="2.40.30.10:FF:000007">
    <property type="entry name" value="Translation initiation factor IF-2"/>
    <property type="match status" value="1"/>
</dbReference>
<dbReference type="FunFam" id="2.40.30.10:FF:000008">
    <property type="entry name" value="Translation initiation factor IF-2"/>
    <property type="match status" value="1"/>
</dbReference>
<dbReference type="FunFam" id="3.40.50.10050:FF:000001">
    <property type="entry name" value="Translation initiation factor IF-2"/>
    <property type="match status" value="1"/>
</dbReference>
<dbReference type="FunFam" id="3.40.50.300:FF:000019">
    <property type="entry name" value="Translation initiation factor IF-2"/>
    <property type="match status" value="1"/>
</dbReference>
<dbReference type="Gene3D" id="3.40.50.300">
    <property type="entry name" value="P-loop containing nucleotide triphosphate hydrolases"/>
    <property type="match status" value="1"/>
</dbReference>
<dbReference type="Gene3D" id="2.40.30.10">
    <property type="entry name" value="Translation factors"/>
    <property type="match status" value="2"/>
</dbReference>
<dbReference type="Gene3D" id="3.40.50.10050">
    <property type="entry name" value="Translation initiation factor IF- 2, domain 3"/>
    <property type="match status" value="1"/>
</dbReference>
<dbReference type="HAMAP" id="MF_00100_B">
    <property type="entry name" value="IF_2_B"/>
    <property type="match status" value="1"/>
</dbReference>
<dbReference type="InterPro" id="IPR053905">
    <property type="entry name" value="EF-G-like_DII"/>
</dbReference>
<dbReference type="InterPro" id="IPR004161">
    <property type="entry name" value="EFTu-like_2"/>
</dbReference>
<dbReference type="InterPro" id="IPR013575">
    <property type="entry name" value="IF2_assoc_dom_bac"/>
</dbReference>
<dbReference type="InterPro" id="IPR044145">
    <property type="entry name" value="IF2_II"/>
</dbReference>
<dbReference type="InterPro" id="IPR006847">
    <property type="entry name" value="IF2_N"/>
</dbReference>
<dbReference type="InterPro" id="IPR027417">
    <property type="entry name" value="P-loop_NTPase"/>
</dbReference>
<dbReference type="InterPro" id="IPR005225">
    <property type="entry name" value="Small_GTP-bd"/>
</dbReference>
<dbReference type="InterPro" id="IPR000795">
    <property type="entry name" value="T_Tr_GTP-bd_dom"/>
</dbReference>
<dbReference type="InterPro" id="IPR000178">
    <property type="entry name" value="TF_IF2_bacterial-like"/>
</dbReference>
<dbReference type="InterPro" id="IPR015760">
    <property type="entry name" value="TIF_IF2"/>
</dbReference>
<dbReference type="InterPro" id="IPR023115">
    <property type="entry name" value="TIF_IF2_dom3"/>
</dbReference>
<dbReference type="InterPro" id="IPR036925">
    <property type="entry name" value="TIF_IF2_dom3_sf"/>
</dbReference>
<dbReference type="InterPro" id="IPR009000">
    <property type="entry name" value="Transl_B-barrel_sf"/>
</dbReference>
<dbReference type="NCBIfam" id="TIGR00487">
    <property type="entry name" value="IF-2"/>
    <property type="match status" value="1"/>
</dbReference>
<dbReference type="NCBIfam" id="TIGR00231">
    <property type="entry name" value="small_GTP"/>
    <property type="match status" value="1"/>
</dbReference>
<dbReference type="PANTHER" id="PTHR43381:SF5">
    <property type="entry name" value="TR-TYPE G DOMAIN-CONTAINING PROTEIN"/>
    <property type="match status" value="1"/>
</dbReference>
<dbReference type="PANTHER" id="PTHR43381">
    <property type="entry name" value="TRANSLATION INITIATION FACTOR IF-2-RELATED"/>
    <property type="match status" value="1"/>
</dbReference>
<dbReference type="Pfam" id="PF22042">
    <property type="entry name" value="EF-G_D2"/>
    <property type="match status" value="1"/>
</dbReference>
<dbReference type="Pfam" id="PF00009">
    <property type="entry name" value="GTP_EFTU"/>
    <property type="match status" value="1"/>
</dbReference>
<dbReference type="Pfam" id="PF03144">
    <property type="entry name" value="GTP_EFTU_D2"/>
    <property type="match status" value="1"/>
</dbReference>
<dbReference type="Pfam" id="PF11987">
    <property type="entry name" value="IF-2"/>
    <property type="match status" value="1"/>
</dbReference>
<dbReference type="Pfam" id="PF08364">
    <property type="entry name" value="IF2_assoc"/>
    <property type="match status" value="1"/>
</dbReference>
<dbReference type="Pfam" id="PF04760">
    <property type="entry name" value="IF2_N"/>
    <property type="match status" value="1"/>
</dbReference>
<dbReference type="SUPFAM" id="SSF52156">
    <property type="entry name" value="Initiation factor IF2/eIF5b, domain 3"/>
    <property type="match status" value="1"/>
</dbReference>
<dbReference type="SUPFAM" id="SSF52540">
    <property type="entry name" value="P-loop containing nucleoside triphosphate hydrolases"/>
    <property type="match status" value="1"/>
</dbReference>
<dbReference type="SUPFAM" id="SSF50447">
    <property type="entry name" value="Translation proteins"/>
    <property type="match status" value="2"/>
</dbReference>
<dbReference type="PROSITE" id="PS51722">
    <property type="entry name" value="G_TR_2"/>
    <property type="match status" value="1"/>
</dbReference>
<dbReference type="PROSITE" id="PS01176">
    <property type="entry name" value="IF2"/>
    <property type="match status" value="1"/>
</dbReference>
<name>IF2_NITWN</name>